<feature type="chain" id="PRO_0000120437" description="Glutamate-1-semialdehyde 2,1-aminomutase">
    <location>
        <begin position="1"/>
        <end position="426"/>
    </location>
</feature>
<feature type="modified residue" description="N6-(pyridoxal phosphate)lysine" evidence="1">
    <location>
        <position position="265"/>
    </location>
</feature>
<protein>
    <recommendedName>
        <fullName evidence="1">Glutamate-1-semialdehyde 2,1-aminomutase</fullName>
        <shortName evidence="1">GSA</shortName>
        <ecNumber evidence="1">5.4.3.8</ecNumber>
    </recommendedName>
    <alternativeName>
        <fullName evidence="1">Glutamate-1-semialdehyde aminotransferase</fullName>
        <shortName evidence="1">GSA-AT</shortName>
    </alternativeName>
</protein>
<reference key="1">
    <citation type="journal article" date="2001" name="Nature">
        <title>Complete genome sequence of a multiple drug resistant Salmonella enterica serovar Typhi CT18.</title>
        <authorList>
            <person name="Parkhill J."/>
            <person name="Dougan G."/>
            <person name="James K.D."/>
            <person name="Thomson N.R."/>
            <person name="Pickard D."/>
            <person name="Wain J."/>
            <person name="Churcher C.M."/>
            <person name="Mungall K.L."/>
            <person name="Bentley S.D."/>
            <person name="Holden M.T.G."/>
            <person name="Sebaihia M."/>
            <person name="Baker S."/>
            <person name="Basham D."/>
            <person name="Brooks K."/>
            <person name="Chillingworth T."/>
            <person name="Connerton P."/>
            <person name="Cronin A."/>
            <person name="Davis P."/>
            <person name="Davies R.M."/>
            <person name="Dowd L."/>
            <person name="White N."/>
            <person name="Farrar J."/>
            <person name="Feltwell T."/>
            <person name="Hamlin N."/>
            <person name="Haque A."/>
            <person name="Hien T.T."/>
            <person name="Holroyd S."/>
            <person name="Jagels K."/>
            <person name="Krogh A."/>
            <person name="Larsen T.S."/>
            <person name="Leather S."/>
            <person name="Moule S."/>
            <person name="O'Gaora P."/>
            <person name="Parry C."/>
            <person name="Quail M.A."/>
            <person name="Rutherford K.M."/>
            <person name="Simmonds M."/>
            <person name="Skelton J."/>
            <person name="Stevens K."/>
            <person name="Whitehead S."/>
            <person name="Barrell B.G."/>
        </authorList>
    </citation>
    <scope>NUCLEOTIDE SEQUENCE [LARGE SCALE GENOMIC DNA]</scope>
    <source>
        <strain>CT18</strain>
    </source>
</reference>
<reference key="2">
    <citation type="journal article" date="2003" name="J. Bacteriol.">
        <title>Comparative genomics of Salmonella enterica serovar Typhi strains Ty2 and CT18.</title>
        <authorList>
            <person name="Deng W."/>
            <person name="Liou S.-R."/>
            <person name="Plunkett G. III"/>
            <person name="Mayhew G.F."/>
            <person name="Rose D.J."/>
            <person name="Burland V."/>
            <person name="Kodoyianni V."/>
            <person name="Schwartz D.C."/>
            <person name="Blattner F.R."/>
        </authorList>
    </citation>
    <scope>NUCLEOTIDE SEQUENCE [LARGE SCALE GENOMIC DNA]</scope>
    <source>
        <strain>ATCC 700931 / Ty2</strain>
    </source>
</reference>
<proteinExistence type="inferred from homology"/>
<dbReference type="EC" id="5.4.3.8" evidence="1"/>
<dbReference type="EMBL" id="AL513382">
    <property type="protein sequence ID" value="CAD01356.1"/>
    <property type="molecule type" value="Genomic_DNA"/>
</dbReference>
<dbReference type="EMBL" id="AE014613">
    <property type="protein sequence ID" value="AAO67934.1"/>
    <property type="molecule type" value="Genomic_DNA"/>
</dbReference>
<dbReference type="RefSeq" id="NP_454810.1">
    <property type="nucleotide sequence ID" value="NC_003198.1"/>
</dbReference>
<dbReference type="RefSeq" id="WP_000045264.1">
    <property type="nucleotide sequence ID" value="NZ_WSUR01000009.1"/>
</dbReference>
<dbReference type="SMR" id="Q8Z9B4"/>
<dbReference type="STRING" id="220341.gene:17584258"/>
<dbReference type="KEGG" id="stt:t0203"/>
<dbReference type="KEGG" id="sty:STY0223"/>
<dbReference type="PATRIC" id="fig|220341.7.peg.225"/>
<dbReference type="eggNOG" id="COG0001">
    <property type="taxonomic scope" value="Bacteria"/>
</dbReference>
<dbReference type="HOGENOM" id="CLU_016922_1_5_6"/>
<dbReference type="OMA" id="WGPLIFG"/>
<dbReference type="OrthoDB" id="9801052at2"/>
<dbReference type="UniPathway" id="UPA00251">
    <property type="reaction ID" value="UER00317"/>
</dbReference>
<dbReference type="Proteomes" id="UP000000541">
    <property type="component" value="Chromosome"/>
</dbReference>
<dbReference type="Proteomes" id="UP000002670">
    <property type="component" value="Chromosome"/>
</dbReference>
<dbReference type="GO" id="GO:0005737">
    <property type="term" value="C:cytoplasm"/>
    <property type="evidence" value="ECO:0007669"/>
    <property type="project" value="UniProtKB-SubCell"/>
</dbReference>
<dbReference type="GO" id="GO:0042286">
    <property type="term" value="F:glutamate-1-semialdehyde 2,1-aminomutase activity"/>
    <property type="evidence" value="ECO:0007669"/>
    <property type="project" value="UniProtKB-UniRule"/>
</dbReference>
<dbReference type="GO" id="GO:0030170">
    <property type="term" value="F:pyridoxal phosphate binding"/>
    <property type="evidence" value="ECO:0007669"/>
    <property type="project" value="InterPro"/>
</dbReference>
<dbReference type="GO" id="GO:0008483">
    <property type="term" value="F:transaminase activity"/>
    <property type="evidence" value="ECO:0007669"/>
    <property type="project" value="InterPro"/>
</dbReference>
<dbReference type="GO" id="GO:0006782">
    <property type="term" value="P:protoporphyrinogen IX biosynthetic process"/>
    <property type="evidence" value="ECO:0007669"/>
    <property type="project" value="UniProtKB-UniRule"/>
</dbReference>
<dbReference type="CDD" id="cd00610">
    <property type="entry name" value="OAT_like"/>
    <property type="match status" value="1"/>
</dbReference>
<dbReference type="FunFam" id="3.40.640.10:FF:000021">
    <property type="entry name" value="Glutamate-1-semialdehyde 2,1-aminomutase"/>
    <property type="match status" value="1"/>
</dbReference>
<dbReference type="FunFam" id="3.90.1150.10:FF:000012">
    <property type="entry name" value="Glutamate-1-semialdehyde 2,1-aminomutase"/>
    <property type="match status" value="1"/>
</dbReference>
<dbReference type="Gene3D" id="3.90.1150.10">
    <property type="entry name" value="Aspartate Aminotransferase, domain 1"/>
    <property type="match status" value="1"/>
</dbReference>
<dbReference type="Gene3D" id="3.40.640.10">
    <property type="entry name" value="Type I PLP-dependent aspartate aminotransferase-like (Major domain)"/>
    <property type="match status" value="1"/>
</dbReference>
<dbReference type="HAMAP" id="MF_00375">
    <property type="entry name" value="HemL_aminotrans_3"/>
    <property type="match status" value="1"/>
</dbReference>
<dbReference type="InterPro" id="IPR004639">
    <property type="entry name" value="4pyrrol_synth_GluAld_NH2Trfase"/>
</dbReference>
<dbReference type="InterPro" id="IPR005814">
    <property type="entry name" value="Aminotrans_3"/>
</dbReference>
<dbReference type="InterPro" id="IPR049704">
    <property type="entry name" value="Aminotrans_3_PPA_site"/>
</dbReference>
<dbReference type="InterPro" id="IPR015424">
    <property type="entry name" value="PyrdxlP-dep_Trfase"/>
</dbReference>
<dbReference type="InterPro" id="IPR015421">
    <property type="entry name" value="PyrdxlP-dep_Trfase_major"/>
</dbReference>
<dbReference type="InterPro" id="IPR015422">
    <property type="entry name" value="PyrdxlP-dep_Trfase_small"/>
</dbReference>
<dbReference type="NCBIfam" id="TIGR00713">
    <property type="entry name" value="hemL"/>
    <property type="match status" value="1"/>
</dbReference>
<dbReference type="NCBIfam" id="NF000818">
    <property type="entry name" value="PRK00062.1"/>
    <property type="match status" value="1"/>
</dbReference>
<dbReference type="PANTHER" id="PTHR43713">
    <property type="entry name" value="GLUTAMATE-1-SEMIALDEHYDE 2,1-AMINOMUTASE"/>
    <property type="match status" value="1"/>
</dbReference>
<dbReference type="PANTHER" id="PTHR43713:SF3">
    <property type="entry name" value="GLUTAMATE-1-SEMIALDEHYDE 2,1-AMINOMUTASE 1, CHLOROPLASTIC-RELATED"/>
    <property type="match status" value="1"/>
</dbReference>
<dbReference type="Pfam" id="PF00202">
    <property type="entry name" value="Aminotran_3"/>
    <property type="match status" value="1"/>
</dbReference>
<dbReference type="SUPFAM" id="SSF53383">
    <property type="entry name" value="PLP-dependent transferases"/>
    <property type="match status" value="1"/>
</dbReference>
<dbReference type="PROSITE" id="PS00600">
    <property type="entry name" value="AA_TRANSFER_CLASS_3"/>
    <property type="match status" value="1"/>
</dbReference>
<accession>Q8Z9B4</accession>
<gene>
    <name evidence="1" type="primary">hemL</name>
    <name type="ordered locus">STY0223</name>
    <name type="ordered locus">t0203</name>
</gene>
<comment type="catalytic activity">
    <reaction evidence="1">
        <text>(S)-4-amino-5-oxopentanoate = 5-aminolevulinate</text>
        <dbReference type="Rhea" id="RHEA:14265"/>
        <dbReference type="ChEBI" id="CHEBI:57501"/>
        <dbReference type="ChEBI" id="CHEBI:356416"/>
        <dbReference type="EC" id="5.4.3.8"/>
    </reaction>
</comment>
<comment type="cofactor">
    <cofactor evidence="1">
        <name>pyridoxal 5'-phosphate</name>
        <dbReference type="ChEBI" id="CHEBI:597326"/>
    </cofactor>
</comment>
<comment type="pathway">
    <text evidence="1">Porphyrin-containing compound metabolism; protoporphyrin-IX biosynthesis; 5-aminolevulinate from L-glutamyl-tRNA(Glu): step 2/2.</text>
</comment>
<comment type="subunit">
    <text evidence="1">Homodimer.</text>
</comment>
<comment type="subcellular location">
    <subcellularLocation>
        <location evidence="1">Cytoplasm</location>
    </subcellularLocation>
</comment>
<comment type="similarity">
    <text evidence="1">Belongs to the class-III pyridoxal-phosphate-dependent aminotransferase family. HemL subfamily.</text>
</comment>
<sequence>MSKSENLYSAARELIPGGVNSPVRAFTGVGGTPLFIEKADGAYLYDVDGKAYIDYVGSWGPMVLGHNHPAIRNAVIEAAERGLSFGAPTEMEVKMAELVTNLVPTMDMVRMVNSGTEATMSAIRLARGFTGRDKIIKFEGCYHGHADCLLVKAGSGALTLGQPNSPGVPADFAKHTLTCTYNDLTSVRAAFEQYPQEIACIIVEPVAGNMNCVPPLPEFLPGLRALCDEFGALLIIDEVMTGFRVALAGAQDYYGVVPDLTCLGKIIGGGMPVGAFGGRRDVMDALAPTGPVYQAGTLSGNPIAMAAGFACLNEVAQPGIHETLDELTTRLAEGLLEAAEEANIPLVVNHVGGMFGIFFTDAESVTCYQDVMACDVERFKRFFHLMLEEGVYLAPSAFEAGFMSVAHSMDDINNTIDAARRVFAKL</sequence>
<name>GSA_SALTI</name>
<organism>
    <name type="scientific">Salmonella typhi</name>
    <dbReference type="NCBI Taxonomy" id="90370"/>
    <lineage>
        <taxon>Bacteria</taxon>
        <taxon>Pseudomonadati</taxon>
        <taxon>Pseudomonadota</taxon>
        <taxon>Gammaproteobacteria</taxon>
        <taxon>Enterobacterales</taxon>
        <taxon>Enterobacteriaceae</taxon>
        <taxon>Salmonella</taxon>
    </lineage>
</organism>
<keyword id="KW-0963">Cytoplasm</keyword>
<keyword id="KW-0413">Isomerase</keyword>
<keyword id="KW-0627">Porphyrin biosynthesis</keyword>
<keyword id="KW-0663">Pyridoxal phosphate</keyword>
<evidence type="ECO:0000255" key="1">
    <source>
        <dbReference type="HAMAP-Rule" id="MF_00375"/>
    </source>
</evidence>